<name>MCO_STAHJ</name>
<evidence type="ECO:0000250" key="1"/>
<evidence type="ECO:0000256" key="2">
    <source>
        <dbReference type="SAM" id="MobiDB-lite"/>
    </source>
</evidence>
<evidence type="ECO:0000305" key="3"/>
<proteinExistence type="inferred from homology"/>
<sequence length="447" mass="50620">MMNMKEDKKNTMDMTNMKHHDERKKLNSSQGKNEIIFPEVAESKKDNNGYKNYTLKAQKGKTEFYKNNFSNTLGYNGNLLGPTLKLKKGDKVKIKLINNLDENTTFHWHGLEVNGKVDGGPSQVIKPGKEKTIKFEVNQDSATLWYHPHPSPNTAKQVYNGLSGLLYIEDSKKNNYPSNYGKNDLPIIIQDKTFVSKKLNYSKTKDEDGTQGDTVLVNGIVNPKLTAKEEKIRLRLLNGSNARDLNLKLSNNQSFEYIASDGGQLKNAKKLKEINLAPSERKEIVIDLSKMKGEKVSLVDNDKTVILPISNKEKSSNKSNTPKVSKKIKLEGMNDNVTINGNKFDPNRIDFTQKLNQKEVWEIENVKDKMGGMKHPFHIHGTQFKVLSVDGEKPPKDMRGKKDVISLEPGQKAKIEVVFKNTGTYMFHCHILEHEDNGMMGQIKVTN</sequence>
<reference key="1">
    <citation type="journal article" date="2005" name="J. Bacteriol.">
        <title>Whole-genome sequencing of Staphylococcus haemolyticus uncovers the extreme plasticity of its genome and the evolution of human-colonizing staphylococcal species.</title>
        <authorList>
            <person name="Takeuchi F."/>
            <person name="Watanabe S."/>
            <person name="Baba T."/>
            <person name="Yuzawa H."/>
            <person name="Ito T."/>
            <person name="Morimoto Y."/>
            <person name="Kuroda M."/>
            <person name="Cui L."/>
            <person name="Takahashi M."/>
            <person name="Ankai A."/>
            <person name="Baba S."/>
            <person name="Fukui S."/>
            <person name="Lee J.C."/>
            <person name="Hiramatsu K."/>
        </authorList>
    </citation>
    <scope>NUCLEOTIDE SEQUENCE [LARGE SCALE GENOMIC DNA]</scope>
    <source>
        <strain>JCSC1435</strain>
    </source>
</reference>
<gene>
    <name type="primary">mco</name>
    <name type="ordered locus">SH0106</name>
</gene>
<protein>
    <recommendedName>
        <fullName>Multicopper oxidase mco</fullName>
        <ecNumber>1.-.-.-</ecNumber>
    </recommendedName>
</protein>
<organism>
    <name type="scientific">Staphylococcus haemolyticus (strain JCSC1435)</name>
    <dbReference type="NCBI Taxonomy" id="279808"/>
    <lineage>
        <taxon>Bacteria</taxon>
        <taxon>Bacillati</taxon>
        <taxon>Bacillota</taxon>
        <taxon>Bacilli</taxon>
        <taxon>Bacillales</taxon>
        <taxon>Staphylococcaceae</taxon>
        <taxon>Staphylococcus</taxon>
    </lineage>
</organism>
<dbReference type="EC" id="1.-.-.-"/>
<dbReference type="EMBL" id="AP006716">
    <property type="protein sequence ID" value="BAE03415.1"/>
    <property type="molecule type" value="Genomic_DNA"/>
</dbReference>
<dbReference type="SMR" id="Q4LAB0"/>
<dbReference type="KEGG" id="sha:SH0106"/>
<dbReference type="eggNOG" id="COG2132">
    <property type="taxonomic scope" value="Bacteria"/>
</dbReference>
<dbReference type="HOGENOM" id="CLU_009100_2_0_9"/>
<dbReference type="Proteomes" id="UP000000543">
    <property type="component" value="Chromosome"/>
</dbReference>
<dbReference type="GO" id="GO:0005737">
    <property type="term" value="C:cytoplasm"/>
    <property type="evidence" value="ECO:0007669"/>
    <property type="project" value="UniProtKB-SubCell"/>
</dbReference>
<dbReference type="GO" id="GO:0005507">
    <property type="term" value="F:copper ion binding"/>
    <property type="evidence" value="ECO:0007669"/>
    <property type="project" value="InterPro"/>
</dbReference>
<dbReference type="GO" id="GO:0016491">
    <property type="term" value="F:oxidoreductase activity"/>
    <property type="evidence" value="ECO:0007669"/>
    <property type="project" value="UniProtKB-KW"/>
</dbReference>
<dbReference type="CDD" id="cd04232">
    <property type="entry name" value="CuRO_1_CueO_FtsP"/>
    <property type="match status" value="1"/>
</dbReference>
<dbReference type="CDD" id="cd13867">
    <property type="entry name" value="CuRO_2_CueO_FtsP"/>
    <property type="match status" value="1"/>
</dbReference>
<dbReference type="CDD" id="cd13890">
    <property type="entry name" value="CuRO_3_CueO_FtsP"/>
    <property type="match status" value="1"/>
</dbReference>
<dbReference type="Gene3D" id="2.60.40.420">
    <property type="entry name" value="Cupredoxins - blue copper proteins"/>
    <property type="match status" value="3"/>
</dbReference>
<dbReference type="InterPro" id="IPR011707">
    <property type="entry name" value="Cu-oxidase-like_N"/>
</dbReference>
<dbReference type="InterPro" id="IPR011706">
    <property type="entry name" value="Cu-oxidase_C"/>
</dbReference>
<dbReference type="InterPro" id="IPR045087">
    <property type="entry name" value="Cu-oxidase_fam"/>
</dbReference>
<dbReference type="InterPro" id="IPR033138">
    <property type="entry name" value="Cu_oxidase_CS"/>
</dbReference>
<dbReference type="InterPro" id="IPR002355">
    <property type="entry name" value="Cu_oxidase_Cu_BS"/>
</dbReference>
<dbReference type="InterPro" id="IPR008972">
    <property type="entry name" value="Cupredoxin"/>
</dbReference>
<dbReference type="PANTHER" id="PTHR48267:SF1">
    <property type="entry name" value="BILIRUBIN OXIDASE"/>
    <property type="match status" value="1"/>
</dbReference>
<dbReference type="PANTHER" id="PTHR48267">
    <property type="entry name" value="CUPREDOXIN SUPERFAMILY PROTEIN"/>
    <property type="match status" value="1"/>
</dbReference>
<dbReference type="Pfam" id="PF07731">
    <property type="entry name" value="Cu-oxidase_2"/>
    <property type="match status" value="1"/>
</dbReference>
<dbReference type="Pfam" id="PF07732">
    <property type="entry name" value="Cu-oxidase_3"/>
    <property type="match status" value="1"/>
</dbReference>
<dbReference type="SUPFAM" id="SSF49503">
    <property type="entry name" value="Cupredoxins"/>
    <property type="match status" value="3"/>
</dbReference>
<dbReference type="PROSITE" id="PS00079">
    <property type="entry name" value="MULTICOPPER_OXIDASE1"/>
    <property type="match status" value="1"/>
</dbReference>
<dbReference type="PROSITE" id="PS00080">
    <property type="entry name" value="MULTICOPPER_OXIDASE2"/>
    <property type="match status" value="1"/>
</dbReference>
<accession>Q4LAB0</accession>
<feature type="chain" id="PRO_0000336998" description="Multicopper oxidase mco">
    <location>
        <begin position="1"/>
        <end position="447"/>
    </location>
</feature>
<feature type="region of interest" description="Disordered" evidence="2">
    <location>
        <begin position="1"/>
        <end position="29"/>
    </location>
</feature>
<feature type="compositionally biased region" description="Basic and acidic residues" evidence="2">
    <location>
        <begin position="1"/>
        <end position="25"/>
    </location>
</feature>
<feature type="binding site" description="type 2 copper site" evidence="1">
    <location>
        <position position="107"/>
    </location>
    <ligand>
        <name>Cu cation</name>
        <dbReference type="ChEBI" id="CHEBI:23378"/>
        <label>1</label>
    </ligand>
</feature>
<feature type="binding site" description="type 3 copper site" evidence="1">
    <location>
        <position position="109"/>
    </location>
    <ligand>
        <name>Cu cation</name>
        <dbReference type="ChEBI" id="CHEBI:23378"/>
        <label>2</label>
    </ligand>
</feature>
<feature type="binding site" description="type 3 copper site" evidence="1">
    <location>
        <position position="147"/>
    </location>
    <ligand>
        <name>Cu cation</name>
        <dbReference type="ChEBI" id="CHEBI:23378"/>
        <label>2</label>
    </ligand>
</feature>
<feature type="binding site" description="type 3 copper site" evidence="1">
    <location>
        <position position="149"/>
    </location>
    <ligand>
        <name>Cu cation</name>
        <dbReference type="ChEBI" id="CHEBI:23378"/>
        <label>3</label>
    </ligand>
</feature>
<feature type="binding site" description="type 1 copper site" evidence="1">
    <location>
        <position position="375"/>
    </location>
    <ligand>
        <name>Cu cation</name>
        <dbReference type="ChEBI" id="CHEBI:23378"/>
        <label>4</label>
    </ligand>
</feature>
<feature type="binding site" description="type 2 copper site" evidence="1">
    <location>
        <position position="378"/>
    </location>
    <ligand>
        <name>Cu cation</name>
        <dbReference type="ChEBI" id="CHEBI:23378"/>
        <label>1</label>
    </ligand>
</feature>
<feature type="binding site" description="type 3 copper site" evidence="1">
    <location>
        <position position="380"/>
    </location>
    <ligand>
        <name>Cu cation</name>
        <dbReference type="ChEBI" id="CHEBI:23378"/>
        <label>3</label>
    </ligand>
</feature>
<feature type="binding site" description="type 3 copper site" evidence="1">
    <location>
        <position position="428"/>
    </location>
    <ligand>
        <name>Cu cation</name>
        <dbReference type="ChEBI" id="CHEBI:23378"/>
        <label>3</label>
    </ligand>
</feature>
<feature type="binding site" description="type 1 copper site" evidence="1">
    <location>
        <position position="429"/>
    </location>
    <ligand>
        <name>Cu cation</name>
        <dbReference type="ChEBI" id="CHEBI:23378"/>
        <label>4</label>
    </ligand>
</feature>
<feature type="binding site" description="type 3 copper site" evidence="1">
    <location>
        <position position="430"/>
    </location>
    <ligand>
        <name>Cu cation</name>
        <dbReference type="ChEBI" id="CHEBI:23378"/>
        <label>2</label>
    </ligand>
</feature>
<feature type="binding site" description="type 1 copper site" evidence="1">
    <location>
        <position position="434"/>
    </location>
    <ligand>
        <name>Cu cation</name>
        <dbReference type="ChEBI" id="CHEBI:23378"/>
        <label>4</label>
    </ligand>
</feature>
<feature type="binding site" description="type 1 copper site" evidence="1">
    <location>
        <position position="439"/>
    </location>
    <ligand>
        <name>Cu cation</name>
        <dbReference type="ChEBI" id="CHEBI:23378"/>
        <label>4</label>
    </ligand>
</feature>
<keyword id="KW-0186">Copper</keyword>
<keyword id="KW-0963">Cytoplasm</keyword>
<keyword id="KW-0479">Metal-binding</keyword>
<keyword id="KW-0560">Oxidoreductase</keyword>
<comment type="function">
    <text evidence="1">May be involved in copper homeostasis and oxidative stress response.</text>
</comment>
<comment type="cofactor">
    <cofactor evidence="1">
        <name>Cu cation</name>
        <dbReference type="ChEBI" id="CHEBI:23378"/>
    </cofactor>
    <text evidence="1">Binds 4 Cu cations per monomer.</text>
</comment>
<comment type="subcellular location">
    <subcellularLocation>
        <location evidence="3">Cytoplasm</location>
    </subcellularLocation>
</comment>
<comment type="similarity">
    <text evidence="3">Belongs to the multicopper oxidase family.</text>
</comment>